<evidence type="ECO:0000250" key="1"/>
<evidence type="ECO:0000256" key="2">
    <source>
        <dbReference type="SAM" id="MobiDB-lite"/>
    </source>
</evidence>
<evidence type="ECO:0000305" key="3"/>
<gene>
    <name type="primary">sin4</name>
    <name type="synonym">med16</name>
    <name type="ORF">AFUA_1G10525</name>
</gene>
<proteinExistence type="inferred from homology"/>
<comment type="function">
    <text evidence="1">Component of the Mediator complex, a coactivator involved in the regulated transcription of nearly all RNA polymerase II-dependent genes. Mediator functions as a bridge to convey information from gene-specific regulatory proteins to the basal RNA polymerase II transcription machinery. Mediator is recruited to promoters by direct interactions with regulatory proteins and serves as a scaffold for the assembly of a functional preinitiation complex with RNA polymerase II and the general transcription factors (By similarity).</text>
</comment>
<comment type="subunit">
    <text evidence="1">Component of the Mediator complex.</text>
</comment>
<comment type="subcellular location">
    <subcellularLocation>
        <location evidence="3">Nucleus</location>
    </subcellularLocation>
</comment>
<comment type="similarity">
    <text evidence="3">Belongs to the Mediator complex subunit 16 family.</text>
</comment>
<protein>
    <recommendedName>
        <fullName>Mediator of RNA polymerase II transcription subunit 16</fullName>
    </recommendedName>
    <alternativeName>
        <fullName>Mediator complex subunit 16</fullName>
    </alternativeName>
</protein>
<organism>
    <name type="scientific">Aspergillus fumigatus (strain ATCC MYA-4609 / CBS 101355 / FGSC A1100 / Af293)</name>
    <name type="common">Neosartorya fumigata</name>
    <dbReference type="NCBI Taxonomy" id="330879"/>
    <lineage>
        <taxon>Eukaryota</taxon>
        <taxon>Fungi</taxon>
        <taxon>Dikarya</taxon>
        <taxon>Ascomycota</taxon>
        <taxon>Pezizomycotina</taxon>
        <taxon>Eurotiomycetes</taxon>
        <taxon>Eurotiomycetidae</taxon>
        <taxon>Eurotiales</taxon>
        <taxon>Aspergillaceae</taxon>
        <taxon>Aspergillus</taxon>
        <taxon>Aspergillus subgen. Fumigati</taxon>
    </lineage>
</organism>
<dbReference type="EMBL" id="AAHF01000004">
    <property type="protein sequence ID" value="EBA27405.1"/>
    <property type="molecule type" value="Genomic_DNA"/>
</dbReference>
<dbReference type="RefSeq" id="XP_001481721.1">
    <property type="nucleotide sequence ID" value="XM_001481671.1"/>
</dbReference>
<dbReference type="STRING" id="330879.A4D9J5"/>
<dbReference type="EnsemblFungi" id="EBA27405">
    <property type="protein sequence ID" value="EBA27405"/>
    <property type="gene ID" value="AFUA_1G10525"/>
</dbReference>
<dbReference type="GeneID" id="5076933"/>
<dbReference type="KEGG" id="afm:AFUA_1G10525"/>
<dbReference type="VEuPathDB" id="FungiDB:Afu1g10525"/>
<dbReference type="eggNOG" id="ENOG502QQU3">
    <property type="taxonomic scope" value="Eukaryota"/>
</dbReference>
<dbReference type="HOGENOM" id="CLU_007624_0_0_1"/>
<dbReference type="InParanoid" id="A4D9J5"/>
<dbReference type="OMA" id="FDTTWLG"/>
<dbReference type="OrthoDB" id="4139168at2759"/>
<dbReference type="Proteomes" id="UP000002530">
    <property type="component" value="Chromosome 1"/>
</dbReference>
<dbReference type="GO" id="GO:0016592">
    <property type="term" value="C:mediator complex"/>
    <property type="evidence" value="ECO:0000318"/>
    <property type="project" value="GO_Central"/>
</dbReference>
<dbReference type="GO" id="GO:0045893">
    <property type="term" value="P:positive regulation of DNA-templated transcription"/>
    <property type="evidence" value="ECO:0000318"/>
    <property type="project" value="GO_Central"/>
</dbReference>
<dbReference type="InterPro" id="IPR048338">
    <property type="entry name" value="Mediator_Med16"/>
</dbReference>
<dbReference type="InterPro" id="IPR048339">
    <property type="entry name" value="Mediator_Med16_C"/>
</dbReference>
<dbReference type="InterPro" id="IPR021665">
    <property type="entry name" value="Mediator_Med16_N"/>
</dbReference>
<dbReference type="InterPro" id="IPR036322">
    <property type="entry name" value="WD40_repeat_dom_sf"/>
</dbReference>
<dbReference type="PANTHER" id="PTHR13224:SF6">
    <property type="entry name" value="MEDIATOR OF RNA POLYMERASE II TRANSCRIPTION SUBUNIT 16"/>
    <property type="match status" value="1"/>
</dbReference>
<dbReference type="PANTHER" id="PTHR13224">
    <property type="entry name" value="THYROID HORMONE RECEPTOR-ASSOCIATED PROTEIN-RELATED"/>
    <property type="match status" value="1"/>
</dbReference>
<dbReference type="Pfam" id="PF20719">
    <property type="entry name" value="Med16_C"/>
    <property type="match status" value="1"/>
</dbReference>
<dbReference type="Pfam" id="PF11635">
    <property type="entry name" value="Med16_N"/>
    <property type="match status" value="1"/>
</dbReference>
<dbReference type="SUPFAM" id="SSF50978">
    <property type="entry name" value="WD40 repeat-like"/>
    <property type="match status" value="1"/>
</dbReference>
<keyword id="KW-0010">Activator</keyword>
<keyword id="KW-0539">Nucleus</keyword>
<keyword id="KW-1185">Reference proteome</keyword>
<keyword id="KW-0804">Transcription</keyword>
<keyword id="KW-0805">Transcription regulation</keyword>
<accession>A4D9J5</accession>
<name>MED16_ASPFU</name>
<sequence length="955" mass="104750">MPLIMEDGINVDDLFGEPGSLELGLSPSTTSPRGLAQRLDEMRLIGCCQKIAWSKLGCIAYISQDGLRVNVRHLQCRPSDGKWVLSEETPLLPVTDAHGGHTLVHLCWNEPGVELAVADSSGRVSIYSISIALNSIAGHRQAAFDPDDDGAQIVGMMWLNTQRTVHSFYQAAKVQGRWAYSPFRRRPIGPFHPVNKAGLVCVTRSGIIRLLYQNPDGRWAEISAELKNTGYSDRLLTHAALVSTQGGILIATHSACQKLCLYRVHIAWTPTQYDPGQQKPPVPWPVPSFRFLHCKVESQCDVRGTNRHAGDNAPGLPSFTNSLYCLTGLDIVLPALDNPAGSTANPWVVAIYSAPLHVTQDHPQQQGPASVFVRWQLDTGPLTLHPKFDDVPSKKNNAQVKPKLELRRLDDVYSDKYAISIDQIEYGNVLAITYDDGSVVFYDPKTMAVVNGVDDANTVTSLAQAGFHHPPEPSGLHISFSPNACAAVMLDGEGQTHLRLTEHSYGAEGGLHDENKYSAAIAALTLAFCRGCGSDVNTDDILLILVRQLTPEAQATFINEAYRALPINCNFTVEQDKLMNHPYIPRCLSIQAALGFKNKYTPRSFASSIPWAVLQLRHASVLYAFFFQYNKGGTTEPHDPDVLRMVLGNTKWALDFSFYVLNELFDLADDFESLSGDQEAFTQKLKSTSSLPLIILLSSMSRAFLRFICRGLRGIYAGYATAAPLSGDARVYYAEIYQTLESAPIRIDAYEKFLAGVDSAVRHAYHGAGFGDAERPGPEKELLVNARVPPVLVPAVSTILRQTVPALKTEIDRITIYMGDYSWLGLSNDRRTEMYRRSRDVDIIKKIPCRPTASALPETNANANANQNGKSSTQVQQRRRRCVRCCEVSSDTHPPRSLLSFRMIVKLGLLRACVCGGMWTLEPSVYSSAQPSGAPVGQATGRTPALVAAGLAGSS</sequence>
<feature type="chain" id="PRO_0000307625" description="Mediator of RNA polymerase II transcription subunit 16">
    <location>
        <begin position="1"/>
        <end position="955"/>
    </location>
</feature>
<feature type="region of interest" description="Disordered" evidence="2">
    <location>
        <begin position="855"/>
        <end position="874"/>
    </location>
</feature>
<feature type="compositionally biased region" description="Polar residues" evidence="2">
    <location>
        <begin position="857"/>
        <end position="873"/>
    </location>
</feature>
<reference key="1">
    <citation type="journal article" date="2005" name="Nature">
        <title>Genomic sequence of the pathogenic and allergenic filamentous fungus Aspergillus fumigatus.</title>
        <authorList>
            <person name="Nierman W.C."/>
            <person name="Pain A."/>
            <person name="Anderson M.J."/>
            <person name="Wortman J.R."/>
            <person name="Kim H.S."/>
            <person name="Arroyo J."/>
            <person name="Berriman M."/>
            <person name="Abe K."/>
            <person name="Archer D.B."/>
            <person name="Bermejo C."/>
            <person name="Bennett J.W."/>
            <person name="Bowyer P."/>
            <person name="Chen D."/>
            <person name="Collins M."/>
            <person name="Coulsen R."/>
            <person name="Davies R."/>
            <person name="Dyer P.S."/>
            <person name="Farman M.L."/>
            <person name="Fedorova N."/>
            <person name="Fedorova N.D."/>
            <person name="Feldblyum T.V."/>
            <person name="Fischer R."/>
            <person name="Fosker N."/>
            <person name="Fraser A."/>
            <person name="Garcia J.L."/>
            <person name="Garcia M.J."/>
            <person name="Goble A."/>
            <person name="Goldman G.H."/>
            <person name="Gomi K."/>
            <person name="Griffith-Jones S."/>
            <person name="Gwilliam R."/>
            <person name="Haas B.J."/>
            <person name="Haas H."/>
            <person name="Harris D.E."/>
            <person name="Horiuchi H."/>
            <person name="Huang J."/>
            <person name="Humphray S."/>
            <person name="Jimenez J."/>
            <person name="Keller N."/>
            <person name="Khouri H."/>
            <person name="Kitamoto K."/>
            <person name="Kobayashi T."/>
            <person name="Konzack S."/>
            <person name="Kulkarni R."/>
            <person name="Kumagai T."/>
            <person name="Lafton A."/>
            <person name="Latge J.-P."/>
            <person name="Li W."/>
            <person name="Lord A."/>
            <person name="Lu C."/>
            <person name="Majoros W.H."/>
            <person name="May G.S."/>
            <person name="Miller B.L."/>
            <person name="Mohamoud Y."/>
            <person name="Molina M."/>
            <person name="Monod M."/>
            <person name="Mouyna I."/>
            <person name="Mulligan S."/>
            <person name="Murphy L.D."/>
            <person name="O'Neil S."/>
            <person name="Paulsen I."/>
            <person name="Penalva M.A."/>
            <person name="Pertea M."/>
            <person name="Price C."/>
            <person name="Pritchard B.L."/>
            <person name="Quail M.A."/>
            <person name="Rabbinowitsch E."/>
            <person name="Rawlins N."/>
            <person name="Rajandream M.A."/>
            <person name="Reichard U."/>
            <person name="Renauld H."/>
            <person name="Robson G.D."/>
            <person name="Rodriguez de Cordoba S."/>
            <person name="Rodriguez-Pena J.M."/>
            <person name="Ronning C.M."/>
            <person name="Rutter S."/>
            <person name="Salzberg S.L."/>
            <person name="Sanchez M."/>
            <person name="Sanchez-Ferrero J.C."/>
            <person name="Saunders D."/>
            <person name="Seeger K."/>
            <person name="Squares R."/>
            <person name="Squares S."/>
            <person name="Takeuchi M."/>
            <person name="Tekaia F."/>
            <person name="Turner G."/>
            <person name="Vazquez de Aldana C.R."/>
            <person name="Weidman J."/>
            <person name="White O."/>
            <person name="Woodward J.R."/>
            <person name="Yu J.-H."/>
            <person name="Fraser C.M."/>
            <person name="Galagan J.E."/>
            <person name="Asai K."/>
            <person name="Machida M."/>
            <person name="Hall N."/>
            <person name="Barrell B.G."/>
            <person name="Denning D.W."/>
        </authorList>
    </citation>
    <scope>NUCLEOTIDE SEQUENCE [LARGE SCALE GENOMIC DNA]</scope>
    <source>
        <strain>ATCC MYA-4609 / CBS 101355 / FGSC A1100 / Af293</strain>
    </source>
</reference>